<evidence type="ECO:0000255" key="1">
    <source>
        <dbReference type="HAMAP-Rule" id="MF_00340"/>
    </source>
</evidence>
<evidence type="ECO:0000256" key="2">
    <source>
        <dbReference type="SAM" id="MobiDB-lite"/>
    </source>
</evidence>
<evidence type="ECO:0000305" key="3"/>
<organism>
    <name type="scientific">Francisella tularensis subsp. mediasiatica (strain FSC147)</name>
    <dbReference type="NCBI Taxonomy" id="441952"/>
    <lineage>
        <taxon>Bacteria</taxon>
        <taxon>Pseudomonadati</taxon>
        <taxon>Pseudomonadota</taxon>
        <taxon>Gammaproteobacteria</taxon>
        <taxon>Thiotrichales</taxon>
        <taxon>Francisellaceae</taxon>
        <taxon>Francisella</taxon>
    </lineage>
</organism>
<dbReference type="EMBL" id="CP000915">
    <property type="protein sequence ID" value="ACD30637.1"/>
    <property type="molecule type" value="Genomic_DNA"/>
</dbReference>
<dbReference type="SMR" id="B2SFU4"/>
<dbReference type="KEGG" id="ftm:FTM_0652"/>
<dbReference type="HOGENOM" id="CLU_129084_2_1_6"/>
<dbReference type="GO" id="GO:0015934">
    <property type="term" value="C:large ribosomal subunit"/>
    <property type="evidence" value="ECO:0007669"/>
    <property type="project" value="InterPro"/>
</dbReference>
<dbReference type="GO" id="GO:0003735">
    <property type="term" value="F:structural constituent of ribosome"/>
    <property type="evidence" value="ECO:0007669"/>
    <property type="project" value="InterPro"/>
</dbReference>
<dbReference type="GO" id="GO:0006412">
    <property type="term" value="P:translation"/>
    <property type="evidence" value="ECO:0007669"/>
    <property type="project" value="UniProtKB-UniRule"/>
</dbReference>
<dbReference type="HAMAP" id="MF_00340">
    <property type="entry name" value="Ribosomal_bL32"/>
    <property type="match status" value="1"/>
</dbReference>
<dbReference type="InterPro" id="IPR002677">
    <property type="entry name" value="Ribosomal_bL32"/>
</dbReference>
<dbReference type="InterPro" id="IPR044957">
    <property type="entry name" value="Ribosomal_bL32_bact"/>
</dbReference>
<dbReference type="InterPro" id="IPR011332">
    <property type="entry name" value="Ribosomal_zn-bd"/>
</dbReference>
<dbReference type="NCBIfam" id="TIGR01031">
    <property type="entry name" value="rpmF_bact"/>
    <property type="match status" value="1"/>
</dbReference>
<dbReference type="PANTHER" id="PTHR35534">
    <property type="entry name" value="50S RIBOSOMAL PROTEIN L32"/>
    <property type="match status" value="1"/>
</dbReference>
<dbReference type="PANTHER" id="PTHR35534:SF1">
    <property type="entry name" value="LARGE RIBOSOMAL SUBUNIT PROTEIN BL32"/>
    <property type="match status" value="1"/>
</dbReference>
<dbReference type="Pfam" id="PF01783">
    <property type="entry name" value="Ribosomal_L32p"/>
    <property type="match status" value="1"/>
</dbReference>
<dbReference type="SUPFAM" id="SSF57829">
    <property type="entry name" value="Zn-binding ribosomal proteins"/>
    <property type="match status" value="1"/>
</dbReference>
<sequence length="60" mass="6879">MAVQQVKKSRSKRDMRRSHDSLTNPTLSTDKSTGELHLRHHVSPNGFYKGRKVVDTKSED</sequence>
<feature type="chain" id="PRO_1000120128" description="Large ribosomal subunit protein bL32">
    <location>
        <begin position="1"/>
        <end position="60"/>
    </location>
</feature>
<feature type="region of interest" description="Disordered" evidence="2">
    <location>
        <begin position="1"/>
        <end position="60"/>
    </location>
</feature>
<feature type="compositionally biased region" description="Basic residues" evidence="2">
    <location>
        <begin position="7"/>
        <end position="16"/>
    </location>
</feature>
<feature type="compositionally biased region" description="Polar residues" evidence="2">
    <location>
        <begin position="22"/>
        <end position="31"/>
    </location>
</feature>
<accession>B2SFU4</accession>
<name>RL32_FRATM</name>
<protein>
    <recommendedName>
        <fullName evidence="1">Large ribosomal subunit protein bL32</fullName>
    </recommendedName>
    <alternativeName>
        <fullName evidence="3">50S ribosomal protein L32</fullName>
    </alternativeName>
</protein>
<reference key="1">
    <citation type="journal article" date="2009" name="PLoS Pathog.">
        <title>Molecular evolutionary consequences of niche restriction in Francisella tularensis, a facultative intracellular pathogen.</title>
        <authorList>
            <person name="Larsson P."/>
            <person name="Elfsmark D."/>
            <person name="Svensson K."/>
            <person name="Wikstroem P."/>
            <person name="Forsman M."/>
            <person name="Brettin T."/>
            <person name="Keim P."/>
            <person name="Johansson A."/>
        </authorList>
    </citation>
    <scope>NUCLEOTIDE SEQUENCE [LARGE SCALE GENOMIC DNA]</scope>
    <source>
        <strain>FSC147</strain>
    </source>
</reference>
<gene>
    <name evidence="1" type="primary">rpmF</name>
    <name type="ordered locus">FTM_0652</name>
</gene>
<proteinExistence type="inferred from homology"/>
<keyword id="KW-0687">Ribonucleoprotein</keyword>
<keyword id="KW-0689">Ribosomal protein</keyword>
<comment type="similarity">
    <text evidence="1">Belongs to the bacterial ribosomal protein bL32 family.</text>
</comment>